<reference key="1">
    <citation type="journal article" date="2006" name="J. Bacteriol.">
        <title>Complete genome sequence of the dehalorespiring bacterium Desulfitobacterium hafniense Y51 and comparison with Dehalococcoides ethenogenes 195.</title>
        <authorList>
            <person name="Nonaka H."/>
            <person name="Keresztes G."/>
            <person name="Shinoda Y."/>
            <person name="Ikenaga Y."/>
            <person name="Abe M."/>
            <person name="Naito K."/>
            <person name="Inatomi K."/>
            <person name="Furukawa K."/>
            <person name="Inui M."/>
            <person name="Yukawa H."/>
        </authorList>
    </citation>
    <scope>NUCLEOTIDE SEQUENCE [LARGE SCALE GENOMIC DNA]</scope>
    <source>
        <strain>Y51</strain>
    </source>
</reference>
<evidence type="ECO:0000255" key="1">
    <source>
        <dbReference type="HAMAP-Rule" id="MF_00074"/>
    </source>
</evidence>
<name>RSMG_DESHY</name>
<accession>Q24MA0</accession>
<protein>
    <recommendedName>
        <fullName evidence="1">Ribosomal RNA small subunit methyltransferase G</fullName>
        <ecNumber evidence="1">2.1.1.-</ecNumber>
    </recommendedName>
    <alternativeName>
        <fullName evidence="1">16S rRNA 7-methylguanosine methyltransferase</fullName>
        <shortName evidence="1">16S rRNA m7G methyltransferase</shortName>
    </alternativeName>
</protein>
<comment type="function">
    <text evidence="1">Specifically methylates the N7 position of a guanine in 16S rRNA.</text>
</comment>
<comment type="subcellular location">
    <subcellularLocation>
        <location evidence="1">Cytoplasm</location>
    </subcellularLocation>
</comment>
<comment type="similarity">
    <text evidence="1">Belongs to the methyltransferase superfamily. RNA methyltransferase RsmG family.</text>
</comment>
<organism>
    <name type="scientific">Desulfitobacterium hafniense (strain Y51)</name>
    <dbReference type="NCBI Taxonomy" id="138119"/>
    <lineage>
        <taxon>Bacteria</taxon>
        <taxon>Bacillati</taxon>
        <taxon>Bacillota</taxon>
        <taxon>Clostridia</taxon>
        <taxon>Eubacteriales</taxon>
        <taxon>Desulfitobacteriaceae</taxon>
        <taxon>Desulfitobacterium</taxon>
    </lineage>
</organism>
<gene>
    <name evidence="1" type="primary">rsmG</name>
    <name type="ordered locus">DSY5053</name>
</gene>
<sequence>MLPEHQELLGRLTRQRLNIELSGDQIEKFSIYADRLVEWNEKVNLTSITEPEEIILKHFVDSLALLSLVQGKRLADIGTGAGFPGIPLKILLPEVEVYLVDSLAKRLDFLETVIKELKLTKVQTVHARAEDFARDPHYRETFDCVTSRAVARLPVLLEYAVPLLKKGGYFLAAKGSQAQEEVMESKKALTVLGAEIKDIKLFNLGAEAEHRAIILVEKTSSTPPAYPRKAGTPGKKPLV</sequence>
<keyword id="KW-0963">Cytoplasm</keyword>
<keyword id="KW-0489">Methyltransferase</keyword>
<keyword id="KW-1185">Reference proteome</keyword>
<keyword id="KW-0698">rRNA processing</keyword>
<keyword id="KW-0949">S-adenosyl-L-methionine</keyword>
<keyword id="KW-0808">Transferase</keyword>
<proteinExistence type="inferred from homology"/>
<dbReference type="EC" id="2.1.1.-" evidence="1"/>
<dbReference type="EMBL" id="AP008230">
    <property type="protein sequence ID" value="BAE86842.1"/>
    <property type="molecule type" value="Genomic_DNA"/>
</dbReference>
<dbReference type="RefSeq" id="WP_011462328.1">
    <property type="nucleotide sequence ID" value="NC_007907.1"/>
</dbReference>
<dbReference type="SMR" id="Q24MA0"/>
<dbReference type="STRING" id="138119.DSY5053"/>
<dbReference type="KEGG" id="dsy:DSY5053"/>
<dbReference type="eggNOG" id="COG0357">
    <property type="taxonomic scope" value="Bacteria"/>
</dbReference>
<dbReference type="HOGENOM" id="CLU_065341_0_0_9"/>
<dbReference type="Proteomes" id="UP000001946">
    <property type="component" value="Chromosome"/>
</dbReference>
<dbReference type="GO" id="GO:0005829">
    <property type="term" value="C:cytosol"/>
    <property type="evidence" value="ECO:0007669"/>
    <property type="project" value="TreeGrafter"/>
</dbReference>
<dbReference type="GO" id="GO:0070043">
    <property type="term" value="F:rRNA (guanine-N7-)-methyltransferase activity"/>
    <property type="evidence" value="ECO:0007669"/>
    <property type="project" value="UniProtKB-UniRule"/>
</dbReference>
<dbReference type="CDD" id="cd02440">
    <property type="entry name" value="AdoMet_MTases"/>
    <property type="match status" value="1"/>
</dbReference>
<dbReference type="FunFam" id="3.40.50.150:FF:000041">
    <property type="entry name" value="Ribosomal RNA small subunit methyltransferase G"/>
    <property type="match status" value="1"/>
</dbReference>
<dbReference type="Gene3D" id="3.40.50.150">
    <property type="entry name" value="Vaccinia Virus protein VP39"/>
    <property type="match status" value="1"/>
</dbReference>
<dbReference type="HAMAP" id="MF_00074">
    <property type="entry name" value="16SrRNA_methyltr_G"/>
    <property type="match status" value="1"/>
</dbReference>
<dbReference type="InterPro" id="IPR003682">
    <property type="entry name" value="rRNA_ssu_MeTfrase_G"/>
</dbReference>
<dbReference type="InterPro" id="IPR029063">
    <property type="entry name" value="SAM-dependent_MTases_sf"/>
</dbReference>
<dbReference type="NCBIfam" id="TIGR00138">
    <property type="entry name" value="rsmG_gidB"/>
    <property type="match status" value="1"/>
</dbReference>
<dbReference type="PANTHER" id="PTHR31760">
    <property type="entry name" value="S-ADENOSYL-L-METHIONINE-DEPENDENT METHYLTRANSFERASES SUPERFAMILY PROTEIN"/>
    <property type="match status" value="1"/>
</dbReference>
<dbReference type="PANTHER" id="PTHR31760:SF0">
    <property type="entry name" value="S-ADENOSYL-L-METHIONINE-DEPENDENT METHYLTRANSFERASES SUPERFAMILY PROTEIN"/>
    <property type="match status" value="1"/>
</dbReference>
<dbReference type="Pfam" id="PF02527">
    <property type="entry name" value="GidB"/>
    <property type="match status" value="1"/>
</dbReference>
<dbReference type="PIRSF" id="PIRSF003078">
    <property type="entry name" value="GidB"/>
    <property type="match status" value="1"/>
</dbReference>
<dbReference type="SUPFAM" id="SSF53335">
    <property type="entry name" value="S-adenosyl-L-methionine-dependent methyltransferases"/>
    <property type="match status" value="1"/>
</dbReference>
<feature type="chain" id="PRO_0000335346" description="Ribosomal RNA small subunit methyltransferase G">
    <location>
        <begin position="1"/>
        <end position="239"/>
    </location>
</feature>
<feature type="binding site" evidence="1">
    <location>
        <position position="78"/>
    </location>
    <ligand>
        <name>S-adenosyl-L-methionine</name>
        <dbReference type="ChEBI" id="CHEBI:59789"/>
    </ligand>
</feature>
<feature type="binding site" evidence="1">
    <location>
        <position position="83"/>
    </location>
    <ligand>
        <name>S-adenosyl-L-methionine</name>
        <dbReference type="ChEBI" id="CHEBI:59789"/>
    </ligand>
</feature>
<feature type="binding site" evidence="1">
    <location>
        <begin position="129"/>
        <end position="130"/>
    </location>
    <ligand>
        <name>S-adenosyl-L-methionine</name>
        <dbReference type="ChEBI" id="CHEBI:59789"/>
    </ligand>
</feature>
<feature type="binding site" evidence="1">
    <location>
        <position position="148"/>
    </location>
    <ligand>
        <name>S-adenosyl-L-methionine</name>
        <dbReference type="ChEBI" id="CHEBI:59789"/>
    </ligand>
</feature>